<gene>
    <name evidence="1" type="primary">efp</name>
    <name type="ordered locus">lin1392</name>
</gene>
<protein>
    <recommendedName>
        <fullName evidence="1">Elongation factor P</fullName>
        <shortName evidence="1">EF-P</shortName>
    </recommendedName>
</protein>
<evidence type="ECO:0000255" key="1">
    <source>
        <dbReference type="HAMAP-Rule" id="MF_00141"/>
    </source>
</evidence>
<proteinExistence type="inferred from homology"/>
<keyword id="KW-0963">Cytoplasm</keyword>
<keyword id="KW-0251">Elongation factor</keyword>
<keyword id="KW-0648">Protein biosynthesis</keyword>
<feature type="chain" id="PRO_0000094275" description="Elongation factor P">
    <location>
        <begin position="1"/>
        <end position="185"/>
    </location>
</feature>
<sequence length="185" mass="20465">MISVNDFKTGLTIEVDNGIWRVLDFQHVKPGKGAAFVRSKLRNLRTGAIQEKTFRGGEKVAKAQIDNRKMAYLYADGTNHVFMDNESYEQIELPEDQIAHELKFLKENMEINIIMYQGETIGIDLPNTVELVVTATDPGIKGDTSSGGSKPATLETGLVVQVPFFVNEGDKLVINTTEAAYVSRA</sequence>
<organism>
    <name type="scientific">Listeria innocua serovar 6a (strain ATCC BAA-680 / CLIP 11262)</name>
    <dbReference type="NCBI Taxonomy" id="272626"/>
    <lineage>
        <taxon>Bacteria</taxon>
        <taxon>Bacillati</taxon>
        <taxon>Bacillota</taxon>
        <taxon>Bacilli</taxon>
        <taxon>Bacillales</taxon>
        <taxon>Listeriaceae</taxon>
        <taxon>Listeria</taxon>
    </lineage>
</organism>
<comment type="function">
    <text evidence="1">Involved in peptide bond synthesis. Stimulates efficient translation and peptide-bond synthesis on native or reconstituted 70S ribosomes in vitro. Probably functions indirectly by altering the affinity of the ribosome for aminoacyl-tRNA, thus increasing their reactivity as acceptors for peptidyl transferase.</text>
</comment>
<comment type="pathway">
    <text evidence="1">Protein biosynthesis; polypeptide chain elongation.</text>
</comment>
<comment type="subcellular location">
    <subcellularLocation>
        <location evidence="1">Cytoplasm</location>
    </subcellularLocation>
</comment>
<comment type="similarity">
    <text evidence="1">Belongs to the elongation factor P family.</text>
</comment>
<dbReference type="EMBL" id="AL596168">
    <property type="protein sequence ID" value="CAC96623.1"/>
    <property type="molecule type" value="Genomic_DNA"/>
</dbReference>
<dbReference type="PIR" id="AG1606">
    <property type="entry name" value="AG1606"/>
</dbReference>
<dbReference type="RefSeq" id="WP_003722482.1">
    <property type="nucleotide sequence ID" value="NC_003212.1"/>
</dbReference>
<dbReference type="SMR" id="P64033"/>
<dbReference type="STRING" id="272626.gene:17565723"/>
<dbReference type="GeneID" id="93234772"/>
<dbReference type="KEGG" id="lin:efp"/>
<dbReference type="eggNOG" id="COG0231">
    <property type="taxonomic scope" value="Bacteria"/>
</dbReference>
<dbReference type="HOGENOM" id="CLU_074944_0_1_9"/>
<dbReference type="OrthoDB" id="9801844at2"/>
<dbReference type="UniPathway" id="UPA00345"/>
<dbReference type="Proteomes" id="UP000002513">
    <property type="component" value="Chromosome"/>
</dbReference>
<dbReference type="GO" id="GO:0005737">
    <property type="term" value="C:cytoplasm"/>
    <property type="evidence" value="ECO:0007669"/>
    <property type="project" value="UniProtKB-SubCell"/>
</dbReference>
<dbReference type="GO" id="GO:0003746">
    <property type="term" value="F:translation elongation factor activity"/>
    <property type="evidence" value="ECO:0007669"/>
    <property type="project" value="UniProtKB-UniRule"/>
</dbReference>
<dbReference type="GO" id="GO:0043043">
    <property type="term" value="P:peptide biosynthetic process"/>
    <property type="evidence" value="ECO:0007669"/>
    <property type="project" value="InterPro"/>
</dbReference>
<dbReference type="CDD" id="cd04470">
    <property type="entry name" value="S1_EF-P_repeat_1"/>
    <property type="match status" value="1"/>
</dbReference>
<dbReference type="CDD" id="cd05794">
    <property type="entry name" value="S1_EF-P_repeat_2"/>
    <property type="match status" value="1"/>
</dbReference>
<dbReference type="FunFam" id="2.30.30.30:FF:000010">
    <property type="entry name" value="Elongation factor P"/>
    <property type="match status" value="1"/>
</dbReference>
<dbReference type="FunFam" id="2.40.50.140:FF:000004">
    <property type="entry name" value="Elongation factor P"/>
    <property type="match status" value="1"/>
</dbReference>
<dbReference type="FunFam" id="2.40.50.140:FF:000009">
    <property type="entry name" value="Elongation factor P"/>
    <property type="match status" value="1"/>
</dbReference>
<dbReference type="Gene3D" id="2.30.30.30">
    <property type="match status" value="1"/>
</dbReference>
<dbReference type="Gene3D" id="2.40.50.140">
    <property type="entry name" value="Nucleic acid-binding proteins"/>
    <property type="match status" value="2"/>
</dbReference>
<dbReference type="HAMAP" id="MF_00141">
    <property type="entry name" value="EF_P"/>
    <property type="match status" value="1"/>
</dbReference>
<dbReference type="InterPro" id="IPR015365">
    <property type="entry name" value="Elong-fact-P_C"/>
</dbReference>
<dbReference type="InterPro" id="IPR012340">
    <property type="entry name" value="NA-bd_OB-fold"/>
</dbReference>
<dbReference type="InterPro" id="IPR014722">
    <property type="entry name" value="Rib_uL2_dom2"/>
</dbReference>
<dbReference type="InterPro" id="IPR020599">
    <property type="entry name" value="Transl_elong_fac_P/YeiP"/>
</dbReference>
<dbReference type="InterPro" id="IPR013185">
    <property type="entry name" value="Transl_elong_KOW-like"/>
</dbReference>
<dbReference type="InterPro" id="IPR001059">
    <property type="entry name" value="Transl_elong_P/YeiP_cen"/>
</dbReference>
<dbReference type="InterPro" id="IPR013852">
    <property type="entry name" value="Transl_elong_P/YeiP_CS"/>
</dbReference>
<dbReference type="InterPro" id="IPR011768">
    <property type="entry name" value="Transl_elongation_fac_P"/>
</dbReference>
<dbReference type="InterPro" id="IPR008991">
    <property type="entry name" value="Translation_prot_SH3-like_sf"/>
</dbReference>
<dbReference type="NCBIfam" id="TIGR00038">
    <property type="entry name" value="efp"/>
    <property type="match status" value="1"/>
</dbReference>
<dbReference type="NCBIfam" id="NF001810">
    <property type="entry name" value="PRK00529.1"/>
    <property type="match status" value="1"/>
</dbReference>
<dbReference type="PANTHER" id="PTHR30053">
    <property type="entry name" value="ELONGATION FACTOR P"/>
    <property type="match status" value="1"/>
</dbReference>
<dbReference type="PANTHER" id="PTHR30053:SF12">
    <property type="entry name" value="ELONGATION FACTOR P (EF-P) FAMILY PROTEIN"/>
    <property type="match status" value="1"/>
</dbReference>
<dbReference type="Pfam" id="PF01132">
    <property type="entry name" value="EFP"/>
    <property type="match status" value="1"/>
</dbReference>
<dbReference type="Pfam" id="PF08207">
    <property type="entry name" value="EFP_N"/>
    <property type="match status" value="1"/>
</dbReference>
<dbReference type="Pfam" id="PF09285">
    <property type="entry name" value="Elong-fact-P_C"/>
    <property type="match status" value="1"/>
</dbReference>
<dbReference type="PIRSF" id="PIRSF005901">
    <property type="entry name" value="EF-P"/>
    <property type="match status" value="1"/>
</dbReference>
<dbReference type="SMART" id="SM01185">
    <property type="entry name" value="EFP"/>
    <property type="match status" value="1"/>
</dbReference>
<dbReference type="SMART" id="SM00841">
    <property type="entry name" value="Elong-fact-P_C"/>
    <property type="match status" value="1"/>
</dbReference>
<dbReference type="SUPFAM" id="SSF50249">
    <property type="entry name" value="Nucleic acid-binding proteins"/>
    <property type="match status" value="2"/>
</dbReference>
<dbReference type="SUPFAM" id="SSF50104">
    <property type="entry name" value="Translation proteins SH3-like domain"/>
    <property type="match status" value="1"/>
</dbReference>
<dbReference type="PROSITE" id="PS01275">
    <property type="entry name" value="EFP"/>
    <property type="match status" value="1"/>
</dbReference>
<name>EFP_LISIN</name>
<accession>P64033</accession>
<accession>Q92BZ9</accession>
<reference key="1">
    <citation type="journal article" date="2001" name="Science">
        <title>Comparative genomics of Listeria species.</title>
        <authorList>
            <person name="Glaser P."/>
            <person name="Frangeul L."/>
            <person name="Buchrieser C."/>
            <person name="Rusniok C."/>
            <person name="Amend A."/>
            <person name="Baquero F."/>
            <person name="Berche P."/>
            <person name="Bloecker H."/>
            <person name="Brandt P."/>
            <person name="Chakraborty T."/>
            <person name="Charbit A."/>
            <person name="Chetouani F."/>
            <person name="Couve E."/>
            <person name="de Daruvar A."/>
            <person name="Dehoux P."/>
            <person name="Domann E."/>
            <person name="Dominguez-Bernal G."/>
            <person name="Duchaud E."/>
            <person name="Durant L."/>
            <person name="Dussurget O."/>
            <person name="Entian K.-D."/>
            <person name="Fsihi H."/>
            <person name="Garcia-del Portillo F."/>
            <person name="Garrido P."/>
            <person name="Gautier L."/>
            <person name="Goebel W."/>
            <person name="Gomez-Lopez N."/>
            <person name="Hain T."/>
            <person name="Hauf J."/>
            <person name="Jackson D."/>
            <person name="Jones L.-M."/>
            <person name="Kaerst U."/>
            <person name="Kreft J."/>
            <person name="Kuhn M."/>
            <person name="Kunst F."/>
            <person name="Kurapkat G."/>
            <person name="Madueno E."/>
            <person name="Maitournam A."/>
            <person name="Mata Vicente J."/>
            <person name="Ng E."/>
            <person name="Nedjari H."/>
            <person name="Nordsiek G."/>
            <person name="Novella S."/>
            <person name="de Pablos B."/>
            <person name="Perez-Diaz J.-C."/>
            <person name="Purcell R."/>
            <person name="Remmel B."/>
            <person name="Rose M."/>
            <person name="Schlueter T."/>
            <person name="Simoes N."/>
            <person name="Tierrez A."/>
            <person name="Vazquez-Boland J.-A."/>
            <person name="Voss H."/>
            <person name="Wehland J."/>
            <person name="Cossart P."/>
        </authorList>
    </citation>
    <scope>NUCLEOTIDE SEQUENCE [LARGE SCALE GENOMIC DNA]</scope>
    <source>
        <strain>ATCC BAA-680 / CLIP 11262</strain>
    </source>
</reference>